<reference key="1">
    <citation type="journal article" date="1997" name="Science">
        <title>The complete genome sequence of Escherichia coli K-12.</title>
        <authorList>
            <person name="Blattner F.R."/>
            <person name="Plunkett G. III"/>
            <person name="Bloch C.A."/>
            <person name="Perna N.T."/>
            <person name="Burland V."/>
            <person name="Riley M."/>
            <person name="Collado-Vides J."/>
            <person name="Glasner J.D."/>
            <person name="Rode C.K."/>
            <person name="Mayhew G.F."/>
            <person name="Gregor J."/>
            <person name="Davis N.W."/>
            <person name="Kirkpatrick H.A."/>
            <person name="Goeden M.A."/>
            <person name="Rose D.J."/>
            <person name="Mau B."/>
            <person name="Shao Y."/>
        </authorList>
    </citation>
    <scope>NUCLEOTIDE SEQUENCE [LARGE SCALE GENOMIC DNA]</scope>
    <source>
        <strain>K12 / MG1655 / ATCC 47076</strain>
    </source>
</reference>
<reference key="2">
    <citation type="journal article" date="2006" name="Mol. Syst. Biol.">
        <title>Highly accurate genome sequences of Escherichia coli K-12 strains MG1655 and W3110.</title>
        <authorList>
            <person name="Hayashi K."/>
            <person name="Morooka N."/>
            <person name="Yamamoto Y."/>
            <person name="Fujita K."/>
            <person name="Isono K."/>
            <person name="Choi S."/>
            <person name="Ohtsubo E."/>
            <person name="Baba T."/>
            <person name="Wanner B.L."/>
            <person name="Mori H."/>
            <person name="Horiuchi T."/>
        </authorList>
    </citation>
    <scope>NUCLEOTIDE SEQUENCE [LARGE SCALE GENOMIC DNA]</scope>
    <source>
        <strain>K12 / W3110 / ATCC 27325 / DSM 5911</strain>
    </source>
</reference>
<reference key="3">
    <citation type="journal article" date="2006" name="J. Bacteriol.">
        <title>YeeI, a novel protein involved in modulation of the activity of the glucose-phosphotransferase system in Escherichia coli K-12.</title>
        <authorList>
            <person name="Becker A.-K."/>
            <person name="Zeppenfeld T."/>
            <person name="Staab A."/>
            <person name="Seitz S."/>
            <person name="Boos W."/>
            <person name="Morita T."/>
            <person name="Aiba H."/>
            <person name="Mahr K."/>
            <person name="Titgemeyer F."/>
            <person name="Jahreis K."/>
        </authorList>
    </citation>
    <scope>FUNCTION</scope>
    <scope>SUBCELLULAR LOCATION</scope>
    <scope>INTERACTION WITH MLC</scope>
    <scope>DISRUPTION PHENOTYPE</scope>
    <source>
        <strain>K12</strain>
    </source>
</reference>
<reference key="4">
    <citation type="journal article" date="2012" name="J. Bacteriol.">
        <title>Characterization of MtfA, a novel regulatory output signal protein of the glucose-phosphotransferase system in Escherichia coli K-12.</title>
        <authorList>
            <person name="Goehler A.K."/>
            <person name="Staab A."/>
            <person name="Gabor E."/>
            <person name="Homann K."/>
            <person name="Klang E."/>
            <person name="Kosfeld A."/>
            <person name="Muus J.E."/>
            <person name="Wulftange J.S."/>
            <person name="Jahreis K."/>
        </authorList>
    </citation>
    <scope>FUNCTION</scope>
    <scope>ACTIVITY REGULATION</scope>
    <scope>INTERACTION WITH MLC</scope>
    <scope>DOMAIN</scope>
    <scope>MUTAGENESIS OF LEU-39; ALA-69; TYR-93; SER-141; ASN-144; HIS-148; GLU-149; HIS-152; ASP-155; TYR-204; ALA-206; GLU-211; PHE-213; VAL-215; SER-217; GLU-218; PHE-221; PRO-224 AND TYR-242</scope>
    <source>
        <strain>K12</strain>
    </source>
</reference>
<proteinExistence type="evidence at protein level"/>
<sequence>MIKWPWKVQESAHQTALPWQEALSIPLLTCLTEQEQSKLVTLAERFLQQKRLVPLQGFELDSLRSCRIALLFCLPVLELGLEWLDGFHEVLIYPAPFVVDDEWEDDIGLVHNQRIVQSGQSWQQGPIVLNWLDIQDSFDASGFNLIIHEVAHKLDTRNGDRASGVPFIPLREVAGWEHDLHAAMNNIQEEIELVGENAASIDAYAASDPAECFAVLSEYFFSAPELFAPRFPSLWQRFCQFYQQDPLQRLHHANDTDSFSATNVH</sequence>
<organism>
    <name type="scientific">Escherichia coli (strain K12)</name>
    <dbReference type="NCBI Taxonomy" id="83333"/>
    <lineage>
        <taxon>Bacteria</taxon>
        <taxon>Pseudomonadati</taxon>
        <taxon>Pseudomonadota</taxon>
        <taxon>Gammaproteobacteria</taxon>
        <taxon>Enterobacterales</taxon>
        <taxon>Enterobacteriaceae</taxon>
        <taxon>Escherichia</taxon>
    </lineage>
</organism>
<dbReference type="EC" id="3.4.11.-" evidence="2 4"/>
<dbReference type="EMBL" id="U00096">
    <property type="protein sequence ID" value="AAC75041.2"/>
    <property type="molecule type" value="Genomic_DNA"/>
</dbReference>
<dbReference type="EMBL" id="AP009048">
    <property type="protein sequence ID" value="BAE76562.1"/>
    <property type="molecule type" value="Genomic_DNA"/>
</dbReference>
<dbReference type="RefSeq" id="NP_416484.2">
    <property type="nucleotide sequence ID" value="NC_000913.3"/>
</dbReference>
<dbReference type="RefSeq" id="WP_001302302.1">
    <property type="nucleotide sequence ID" value="NZ_SSZK01000059.1"/>
</dbReference>
<dbReference type="SMR" id="P76346"/>
<dbReference type="BioGRID" id="4261319">
    <property type="interactions" value="29"/>
</dbReference>
<dbReference type="BioGRID" id="850840">
    <property type="interactions" value="5"/>
</dbReference>
<dbReference type="FunCoup" id="P76346">
    <property type="interactions" value="48"/>
</dbReference>
<dbReference type="IntAct" id="P76346">
    <property type="interactions" value="19"/>
</dbReference>
<dbReference type="STRING" id="511145.b1976"/>
<dbReference type="MEROPS" id="M90.001"/>
<dbReference type="jPOST" id="P76346"/>
<dbReference type="PaxDb" id="511145-b1976"/>
<dbReference type="EnsemblBacteria" id="AAC75041">
    <property type="protein sequence ID" value="AAC75041"/>
    <property type="gene ID" value="b1976"/>
</dbReference>
<dbReference type="GeneID" id="75205786"/>
<dbReference type="GeneID" id="946489"/>
<dbReference type="KEGG" id="ecj:JW1958"/>
<dbReference type="KEGG" id="eco:b1976"/>
<dbReference type="KEGG" id="ecoc:C3026_11165"/>
<dbReference type="PATRIC" id="fig|1411691.4.peg.274"/>
<dbReference type="EchoBASE" id="EB3159"/>
<dbReference type="eggNOG" id="COG3228">
    <property type="taxonomic scope" value="Bacteria"/>
</dbReference>
<dbReference type="HOGENOM" id="CLU_063037_2_0_6"/>
<dbReference type="InParanoid" id="P76346"/>
<dbReference type="OMA" id="EHSGEAW"/>
<dbReference type="OrthoDB" id="9786424at2"/>
<dbReference type="PhylomeDB" id="P76346"/>
<dbReference type="BioCyc" id="EcoCyc:G7063-MONOMER"/>
<dbReference type="BioCyc" id="MetaCyc:G7063-MONOMER"/>
<dbReference type="PRO" id="PR:P76346"/>
<dbReference type="Proteomes" id="UP000000625">
    <property type="component" value="Chromosome"/>
</dbReference>
<dbReference type="GO" id="GO:0005829">
    <property type="term" value="C:cytosol"/>
    <property type="evidence" value="ECO:0000314"/>
    <property type="project" value="EcoCyc"/>
</dbReference>
<dbReference type="GO" id="GO:0004177">
    <property type="term" value="F:aminopeptidase activity"/>
    <property type="evidence" value="ECO:0000314"/>
    <property type="project" value="EcoCyc"/>
</dbReference>
<dbReference type="GO" id="GO:0008237">
    <property type="term" value="F:metallopeptidase activity"/>
    <property type="evidence" value="ECO:0007669"/>
    <property type="project" value="UniProtKB-UniRule"/>
</dbReference>
<dbReference type="GO" id="GO:0008270">
    <property type="term" value="F:zinc ion binding"/>
    <property type="evidence" value="ECO:0007669"/>
    <property type="project" value="UniProtKB-UniRule"/>
</dbReference>
<dbReference type="GO" id="GO:0006508">
    <property type="term" value="P:proteolysis"/>
    <property type="evidence" value="ECO:0007669"/>
    <property type="project" value="UniProtKB-KW"/>
</dbReference>
<dbReference type="CDD" id="cd20169">
    <property type="entry name" value="Peptidase_M90_mtfA"/>
    <property type="match status" value="1"/>
</dbReference>
<dbReference type="FunFam" id="1.10.472.150:FF:000001">
    <property type="entry name" value="Protein MtfA"/>
    <property type="match status" value="1"/>
</dbReference>
<dbReference type="FunFam" id="3.40.390.10:FF:000012">
    <property type="entry name" value="Protein MtfA"/>
    <property type="match status" value="1"/>
</dbReference>
<dbReference type="Gene3D" id="3.40.390.10">
    <property type="entry name" value="Collagenase (Catalytic Domain)"/>
    <property type="match status" value="1"/>
</dbReference>
<dbReference type="Gene3D" id="1.10.472.150">
    <property type="entry name" value="Glucose-regulated metallo-peptidase M90, N-terminal domain"/>
    <property type="match status" value="1"/>
</dbReference>
<dbReference type="HAMAP" id="MF_01593">
    <property type="entry name" value="MtfA"/>
    <property type="match status" value="1"/>
</dbReference>
<dbReference type="InterPro" id="IPR024079">
    <property type="entry name" value="MetalloPept_cat_dom_sf"/>
</dbReference>
<dbReference type="InterPro" id="IPR057256">
    <property type="entry name" value="MtfA_enterob"/>
</dbReference>
<dbReference type="InterPro" id="IPR010384">
    <property type="entry name" value="MtfA_fam"/>
</dbReference>
<dbReference type="InterPro" id="IPR042252">
    <property type="entry name" value="MtfA_N"/>
</dbReference>
<dbReference type="NCBIfam" id="NF011939">
    <property type="entry name" value="PRK15410.1"/>
    <property type="match status" value="1"/>
</dbReference>
<dbReference type="PANTHER" id="PTHR30164">
    <property type="entry name" value="MTFA PEPTIDASE"/>
    <property type="match status" value="1"/>
</dbReference>
<dbReference type="PANTHER" id="PTHR30164:SF2">
    <property type="entry name" value="PROTEIN MTFA"/>
    <property type="match status" value="1"/>
</dbReference>
<dbReference type="Pfam" id="PF06167">
    <property type="entry name" value="Peptidase_M90"/>
    <property type="match status" value="1"/>
</dbReference>
<dbReference type="SUPFAM" id="SSF55486">
    <property type="entry name" value="Metalloproteases ('zincins'), catalytic domain"/>
    <property type="match status" value="1"/>
</dbReference>
<protein>
    <recommendedName>
        <fullName evidence="2 5">Mlc titration factor A</fullName>
    </recommendedName>
    <alternativeName>
        <fullName evidence="5">Mlc-binding protein</fullName>
    </alternativeName>
    <alternativeName>
        <fullName evidence="2 6">Probable zinc metallopeptidase MtfA</fullName>
        <ecNumber evidence="2 4">3.4.11.-</ecNumber>
    </alternativeName>
</protein>
<accession>P76346</accession>
<accession>Q2MAZ4</accession>
<name>MTFA_ECOLI</name>
<evidence type="ECO:0000250" key="1">
    <source>
        <dbReference type="UniProtKB" id="A6TB83"/>
    </source>
</evidence>
<evidence type="ECO:0000255" key="2">
    <source>
        <dbReference type="HAMAP-Rule" id="MF_01593"/>
    </source>
</evidence>
<evidence type="ECO:0000269" key="3">
    <source>
    </source>
</evidence>
<evidence type="ECO:0000269" key="4">
    <source>
    </source>
</evidence>
<evidence type="ECO:0000303" key="5">
    <source>
    </source>
</evidence>
<evidence type="ECO:0000305" key="6"/>
<comment type="function">
    <text evidence="3 4">Involved in the modulation of the activity of the glucose-phosphotransferase system (glucose-PTS) (PubMed:16855233). Interacts with the transcriptional repressor Mlc, preventing its interaction with DNA and leading to the modulation of expression of genes regulated by Mlc, including ptsG, which encodes the PTS system glucose-specific EIICB component (PubMed:16855233, PubMed:22178967).</text>
</comment>
<comment type="function">
    <text evidence="1 4">Shows zinc-dependent metallopeptidase activity (By similarity). In vitro, can cleave several artificial substrates (PubMed:22178967). The greatest activity and specificity is observed for L-alanine fused to 4-nitroanilide (L-alanine-pNA) (PubMed:22178967). Shows significantly lower activity towards L-arginine-pNA, L-proline-pNA, hippuryl-L-phenylalanine and hippuryl-L-arginine, and cannot use FTC-casein (PubMed:22178967). Mlc does not appear to be a biologically relevant peptidase substrate (PubMed:22178967). Biologically relevant targets may have a function in growth transition under changing environmental conditions (PubMed:22178967).</text>
</comment>
<comment type="cofactor">
    <cofactor evidence="2">
        <name>Zn(2+)</name>
        <dbReference type="ChEBI" id="CHEBI:29105"/>
    </cofactor>
    <text evidence="2">Binds 1 zinc ion per subunit.</text>
</comment>
<comment type="activity regulation">
    <text evidence="4">Proteolytic activity is stimulated by interaction with Mlc (PubMed:22178967). Addition of the chelators EDTA or phenanthroline significantly reduces the peptidase activity, whereas the addition of other protease inhibitors has much less effect (PubMed:22178967).</text>
</comment>
<comment type="subunit">
    <text evidence="3 4">Interacts with Mlc with high affinity.</text>
</comment>
<comment type="interaction">
    <interactant intactId="EBI-1126682">
        <id>P76346</id>
    </interactant>
    <interactant intactId="EBI-1116104">
        <id>P50456</id>
        <label>mlc</label>
    </interactant>
    <organismsDiffer>false</organismsDiffer>
    <experiments>2</experiments>
</comment>
<comment type="subcellular location">
    <subcellularLocation>
        <location evidence="2 3">Cytoplasm</location>
    </subcellularLocation>
</comment>
<comment type="domain">
    <text evidence="4">The C-terminal part of MtfA is sufficient for Mlc binding.</text>
</comment>
<comment type="disruption phenotype">
    <text evidence="3">Mutants exhibit increased generation times during growth on glucose, reduced transport of methyl-alpha-D-glucopyranoside, a substrate of the glucose-specific EIICB PTS system, reduced induction of a ptsG-lacZ operon fusion, and reduced catabolite repression in lactose/glucose diauxic growth experiments.</text>
</comment>
<comment type="miscellaneous">
    <text evidence="4">The two functions, Mlc binding and proteolysis, are clearly distinct from one another.</text>
</comment>
<comment type="similarity">
    <text evidence="2 6">Belongs to the MtfA family.</text>
</comment>
<keyword id="KW-0031">Aminopeptidase</keyword>
<keyword id="KW-0963">Cytoplasm</keyword>
<keyword id="KW-0378">Hydrolase</keyword>
<keyword id="KW-0479">Metal-binding</keyword>
<keyword id="KW-0482">Metalloprotease</keyword>
<keyword id="KW-0645">Protease</keyword>
<keyword id="KW-1185">Reference proteome</keyword>
<keyword id="KW-0862">Zinc</keyword>
<gene>
    <name evidence="2 5" type="primary">mtfA</name>
    <name type="synonym">yeeI</name>
    <name type="ordered locus">b1976</name>
    <name type="ordered locus">JW1958</name>
</gene>
<feature type="chain" id="PRO_0000169108" description="Mlc titration factor A">
    <location>
        <begin position="1"/>
        <end position="265"/>
    </location>
</feature>
<feature type="binding site" evidence="2">
    <location>
        <position position="111"/>
    </location>
    <ligand>
        <name>Zn(2+)</name>
        <dbReference type="ChEBI" id="CHEBI:29105"/>
    </ligand>
</feature>
<feature type="binding site" evidence="2">
    <location>
        <position position="148"/>
    </location>
    <ligand>
        <name>Zn(2+)</name>
        <dbReference type="ChEBI" id="CHEBI:29105"/>
    </ligand>
</feature>
<feature type="binding site" evidence="2">
    <location>
        <position position="152"/>
    </location>
    <ligand>
        <name>Zn(2+)</name>
        <dbReference type="ChEBI" id="CHEBI:29105"/>
    </ligand>
</feature>
<feature type="binding site" evidence="2">
    <location>
        <position position="211"/>
    </location>
    <ligand>
        <name>Zn(2+)</name>
        <dbReference type="ChEBI" id="CHEBI:29105"/>
    </ligand>
</feature>
<feature type="mutagenesis site" description="Does not affect protease activity with L-alanine-pNA as substrate. No change in interaction with Mlc." evidence="4">
    <original>L</original>
    <variation>A</variation>
    <location>
        <position position="39"/>
    </location>
</feature>
<feature type="mutagenesis site" description="Decreases interaction with Mlc." evidence="4">
    <original>L</original>
    <variation>E</variation>
    <location>
        <position position="39"/>
    </location>
</feature>
<feature type="mutagenesis site" description="No change in interaction with Mlc." evidence="4">
    <original>L</original>
    <variation>T</variation>
    <location>
        <position position="39"/>
    </location>
</feature>
<feature type="mutagenesis site" description="Does not affect protease activity with L-alanine-pNA as substrate. Decreases interaction with Mlc." evidence="4">
    <original>A</original>
    <variation>D</variation>
    <location>
        <position position="69"/>
    </location>
</feature>
<feature type="mutagenesis site" description="No change in interaction with Mlc." evidence="4">
    <original>A</original>
    <variation>S</variation>
    <location>
        <position position="69"/>
    </location>
</feature>
<feature type="mutagenesis site" description="Retains 45% of wild-type protease activity with L-alanine-pNA as substrate. Does not affect Mlc binding." evidence="4">
    <original>Y</original>
    <variation>S</variation>
    <location>
        <position position="93"/>
    </location>
</feature>
<feature type="mutagenesis site" description="Decreases interaction with Mlc." evidence="4">
    <original>S</original>
    <variation>A</variation>
    <location>
        <position position="141"/>
    </location>
</feature>
<feature type="mutagenesis site" description="Retains 30% of wild-type protease activity with L-alanine-pNA as substrate. Shows reduced Mlc binding." evidence="4">
    <original>S</original>
    <variation>F</variation>
    <location>
        <position position="141"/>
    </location>
</feature>
<feature type="mutagenesis site" description="Does not affect protease activity with L-alanine-pNA as substrate. Decreases interaction with Mlc." evidence="4">
    <original>N</original>
    <variation>D</variation>
    <location>
        <position position="144"/>
    </location>
</feature>
<feature type="mutagenesis site" description="Decreases interaction with Mlc." evidence="4">
    <original>N</original>
    <variation>Q</variation>
    <location>
        <position position="144"/>
    </location>
</feature>
<feature type="mutagenesis site" description="Retains 70% of wild-type protease activity with L-alanine-pNA as substrate. Decreases interaction with Mlc." evidence="4">
    <original>H</original>
    <variation>K</variation>
    <location>
        <position position="148"/>
    </location>
</feature>
<feature type="mutagenesis site" description="Does not affect protease activity with L-alanine-pNA as substrate. Decreases interaction with Mlc." evidence="4">
    <original>H</original>
    <variation>Q</variation>
    <location>
        <position position="148"/>
    </location>
</feature>
<feature type="mutagenesis site" description="Retains 59% of wild-type protease activity with L-alanine-pNA as substrate. Does not affect Mlc binding." evidence="4">
    <original>E</original>
    <variation>D</variation>
    <location>
        <position position="149"/>
    </location>
</feature>
<feature type="mutagenesis site" description="Retains 19% of wild-type protease activity with L-alanine-pNA as substrate. Does not affect Mlc binding." evidence="4">
    <original>E</original>
    <variation>Q</variation>
    <location>
        <position position="149"/>
    </location>
</feature>
<feature type="mutagenesis site" description="Retains 69% of wild-type protease activity with L-alanine-pNA as substrate. Does not affect Mlc binding." evidence="4">
    <original>H</original>
    <variation>K</variation>
    <location>
        <position position="152"/>
    </location>
</feature>
<feature type="mutagenesis site" description="Retains 82% of wild-type protease activity with L-alanine-pNA as substrate. Decreases interaction with Mlc." evidence="4">
    <original>H</original>
    <variation>Q</variation>
    <location>
        <position position="152"/>
    </location>
</feature>
<feature type="mutagenesis site" description="Decreases interaction with Mlc." evidence="4">
    <original>D</original>
    <variation>E</variation>
    <location>
        <position position="155"/>
    </location>
</feature>
<feature type="mutagenesis site" description="Retains 67% of wild-type protease activity with L-alanine-pNA as substrate. Decreases interaction with Mlc." evidence="4">
    <original>D</original>
    <variation>N</variation>
    <location>
        <position position="155"/>
    </location>
</feature>
<feature type="mutagenesis site" description="Does not affect protease activity with L-alanine-pNA as substrate. Decreases interaction with Mlc." evidence="4">
    <original>Y</original>
    <variation>S</variation>
    <location>
        <position position="204"/>
    </location>
</feature>
<feature type="mutagenesis site" description="Retains 23% of wild-type protease activity with L-alanine-pNA as substrate. Decreases interaction with Mlc." evidence="4">
    <original>A</original>
    <variation>D</variation>
    <location>
        <position position="206"/>
    </location>
</feature>
<feature type="mutagenesis site" description="Decreases interaction with Mlc." evidence="4">
    <original>A</original>
    <variation>S</variation>
    <location>
        <position position="206"/>
    </location>
</feature>
<feature type="mutagenesis site" description="Does not affect protease activity with L-alanine-pNA as substrate. Does not affect Mlc binding." evidence="4">
    <original>E</original>
    <variation>D</variation>
    <location>
        <position position="211"/>
    </location>
</feature>
<feature type="mutagenesis site" description="Retains 62% of wild-type protease activity with L-alanine-pNA as substrate. Does not affect Mlc binding." evidence="4">
    <original>E</original>
    <variation>Q</variation>
    <location>
        <position position="211"/>
    </location>
</feature>
<feature type="mutagenesis site" description="Retains 86% of wild-type protease activity with L-alanine-pNA as substrate. Decreases interaction with Mlc." evidence="4">
    <original>F</original>
    <variation>M</variation>
    <location>
        <position position="213"/>
    </location>
</feature>
<feature type="mutagenesis site" description="Retains 75% of wild-type protease activity with L-alanine-pNA as substrate. Decreases interaction with Mlc." evidence="4">
    <original>V</original>
    <variation>D</variation>
    <location>
        <position position="215"/>
    </location>
</feature>
<feature type="mutagenesis site" description="Retains 91% of wild-type protease activity with L-alanine-pNA as substrate. No change in interaction with Mlc." evidence="4">
    <original>V</original>
    <variation>L</variation>
    <location>
        <position position="215"/>
    </location>
</feature>
<feature type="mutagenesis site" description="Does not affect protease activity with L-alanine-pNA as substrate. Decreases interaction with Mlc." evidence="4">
    <original>S</original>
    <variation>A</variation>
    <location>
        <position position="217"/>
    </location>
</feature>
<feature type="mutagenesis site" description="Does not affect protease activity with L-alanine-pNA as substrate. Decreases interaction with Mlc." evidence="4">
    <original>E</original>
    <variation>D</variation>
    <variation>Q</variation>
    <location>
        <position position="218"/>
    </location>
</feature>
<feature type="mutagenesis site" description="Does not affect protease activity with L-alanine-pNA as substrate. Decreases interaction with Mlc." evidence="4">
    <original>F</original>
    <variation>M</variation>
    <location>
        <position position="221"/>
    </location>
</feature>
<feature type="mutagenesis site" description="Retains 70% of wild-type protease activity with L-alanine-pNA as substrate. Does not affect Mlc binding." evidence="4">
    <original>P</original>
    <variation>S</variation>
    <location>
        <position position="224"/>
    </location>
</feature>
<feature type="mutagenesis site" description="Retains 29% of wild-type protease activity with L-alanine-pNA as substrate. Decreases interaction with Mlc." evidence="4">
    <original>Y</original>
    <variation>S</variation>
    <location>
        <position position="242"/>
    </location>
</feature>